<dbReference type="EC" id="7.1.1.-" evidence="1"/>
<dbReference type="EMBL" id="CP000458">
    <property type="protein sequence ID" value="ABK08992.1"/>
    <property type="molecule type" value="Genomic_DNA"/>
</dbReference>
<dbReference type="RefSeq" id="WP_006478270.1">
    <property type="nucleotide sequence ID" value="NC_008542.1"/>
</dbReference>
<dbReference type="SMR" id="A0K915"/>
<dbReference type="GeneID" id="93128467"/>
<dbReference type="KEGG" id="bch:Bcen2424_2241"/>
<dbReference type="HOGENOM" id="CLU_067218_5_1_4"/>
<dbReference type="GO" id="GO:0005886">
    <property type="term" value="C:plasma membrane"/>
    <property type="evidence" value="ECO:0007669"/>
    <property type="project" value="UniProtKB-SubCell"/>
</dbReference>
<dbReference type="GO" id="GO:0051539">
    <property type="term" value="F:4 iron, 4 sulfur cluster binding"/>
    <property type="evidence" value="ECO:0007669"/>
    <property type="project" value="UniProtKB-KW"/>
</dbReference>
<dbReference type="GO" id="GO:0005506">
    <property type="term" value="F:iron ion binding"/>
    <property type="evidence" value="ECO:0007669"/>
    <property type="project" value="UniProtKB-UniRule"/>
</dbReference>
<dbReference type="GO" id="GO:0050136">
    <property type="term" value="F:NADH:ubiquinone reductase (non-electrogenic) activity"/>
    <property type="evidence" value="ECO:0007669"/>
    <property type="project" value="UniProtKB-UniRule"/>
</dbReference>
<dbReference type="GO" id="GO:0048038">
    <property type="term" value="F:quinone binding"/>
    <property type="evidence" value="ECO:0007669"/>
    <property type="project" value="UniProtKB-KW"/>
</dbReference>
<dbReference type="GO" id="GO:0009060">
    <property type="term" value="P:aerobic respiration"/>
    <property type="evidence" value="ECO:0007669"/>
    <property type="project" value="TreeGrafter"/>
</dbReference>
<dbReference type="FunFam" id="3.30.70.3270:FF:000003">
    <property type="entry name" value="NADH-quinone oxidoreductase subunit I"/>
    <property type="match status" value="1"/>
</dbReference>
<dbReference type="Gene3D" id="3.30.70.3270">
    <property type="match status" value="1"/>
</dbReference>
<dbReference type="HAMAP" id="MF_01351">
    <property type="entry name" value="NDH1_NuoI"/>
    <property type="match status" value="1"/>
</dbReference>
<dbReference type="InterPro" id="IPR017896">
    <property type="entry name" value="4Fe4S_Fe-S-bd"/>
</dbReference>
<dbReference type="InterPro" id="IPR017900">
    <property type="entry name" value="4Fe4S_Fe_S_CS"/>
</dbReference>
<dbReference type="InterPro" id="IPR010226">
    <property type="entry name" value="NADH_quinone_OxRdtase_chainI"/>
</dbReference>
<dbReference type="NCBIfam" id="TIGR01971">
    <property type="entry name" value="NuoI"/>
    <property type="match status" value="1"/>
</dbReference>
<dbReference type="NCBIfam" id="NF004538">
    <property type="entry name" value="PRK05888.1-4"/>
    <property type="match status" value="1"/>
</dbReference>
<dbReference type="NCBIfam" id="NF004539">
    <property type="entry name" value="PRK05888.1-5"/>
    <property type="match status" value="1"/>
</dbReference>
<dbReference type="PANTHER" id="PTHR10849:SF20">
    <property type="entry name" value="NADH DEHYDROGENASE [UBIQUINONE] IRON-SULFUR PROTEIN 8, MITOCHONDRIAL"/>
    <property type="match status" value="1"/>
</dbReference>
<dbReference type="PANTHER" id="PTHR10849">
    <property type="entry name" value="NADH DEHYDROGENASE UBIQUINONE IRON-SULFUR PROTEIN 8, MITOCHONDRIAL"/>
    <property type="match status" value="1"/>
</dbReference>
<dbReference type="Pfam" id="PF12838">
    <property type="entry name" value="Fer4_7"/>
    <property type="match status" value="1"/>
</dbReference>
<dbReference type="SUPFAM" id="SSF54862">
    <property type="entry name" value="4Fe-4S ferredoxins"/>
    <property type="match status" value="1"/>
</dbReference>
<dbReference type="PROSITE" id="PS00198">
    <property type="entry name" value="4FE4S_FER_1"/>
    <property type="match status" value="2"/>
</dbReference>
<dbReference type="PROSITE" id="PS51379">
    <property type="entry name" value="4FE4S_FER_2"/>
    <property type="match status" value="2"/>
</dbReference>
<proteinExistence type="inferred from homology"/>
<evidence type="ECO:0000255" key="1">
    <source>
        <dbReference type="HAMAP-Rule" id="MF_01351"/>
    </source>
</evidence>
<protein>
    <recommendedName>
        <fullName evidence="1">NADH-quinone oxidoreductase subunit I</fullName>
        <ecNumber evidence="1">7.1.1.-</ecNumber>
    </recommendedName>
    <alternativeName>
        <fullName evidence="1">NADH dehydrogenase I subunit I</fullName>
    </alternativeName>
    <alternativeName>
        <fullName evidence="1">NDH-1 subunit I</fullName>
    </alternativeName>
</protein>
<sequence length="162" mass="18655">MTAIQHFFKTFFLTELLKGLALTGRYTFKRKFTVQFPEEKTPISPRFRGLHALRRYENGEERCIACKLCEAVCPALAITIESETRADNTRRTTRYDIDLTKCIFCGFCEESCPVDSIVETQILEYHGEKRGDLYFTKEMLLAVGDRYEKDIAAAKAADAPYR</sequence>
<keyword id="KW-0004">4Fe-4S</keyword>
<keyword id="KW-0997">Cell inner membrane</keyword>
<keyword id="KW-1003">Cell membrane</keyword>
<keyword id="KW-0408">Iron</keyword>
<keyword id="KW-0411">Iron-sulfur</keyword>
<keyword id="KW-0472">Membrane</keyword>
<keyword id="KW-0479">Metal-binding</keyword>
<keyword id="KW-0520">NAD</keyword>
<keyword id="KW-0874">Quinone</keyword>
<keyword id="KW-0677">Repeat</keyword>
<keyword id="KW-1278">Translocase</keyword>
<keyword id="KW-0830">Ubiquinone</keyword>
<accession>A0K915</accession>
<comment type="function">
    <text evidence="1">NDH-1 shuttles electrons from NADH, via FMN and iron-sulfur (Fe-S) centers, to quinones in the respiratory chain. The immediate electron acceptor for the enzyme in this species is believed to be ubiquinone. Couples the redox reaction to proton translocation (for every two electrons transferred, four hydrogen ions are translocated across the cytoplasmic membrane), and thus conserves the redox energy in a proton gradient.</text>
</comment>
<comment type="catalytic activity">
    <reaction evidence="1">
        <text>a quinone + NADH + 5 H(+)(in) = a quinol + NAD(+) + 4 H(+)(out)</text>
        <dbReference type="Rhea" id="RHEA:57888"/>
        <dbReference type="ChEBI" id="CHEBI:15378"/>
        <dbReference type="ChEBI" id="CHEBI:24646"/>
        <dbReference type="ChEBI" id="CHEBI:57540"/>
        <dbReference type="ChEBI" id="CHEBI:57945"/>
        <dbReference type="ChEBI" id="CHEBI:132124"/>
    </reaction>
</comment>
<comment type="cofactor">
    <cofactor evidence="1">
        <name>[4Fe-4S] cluster</name>
        <dbReference type="ChEBI" id="CHEBI:49883"/>
    </cofactor>
    <text evidence="1">Binds 2 [4Fe-4S] clusters per subunit.</text>
</comment>
<comment type="subunit">
    <text evidence="1">NDH-1 is composed of 14 different subunits. Subunits NuoA, H, J, K, L, M, N constitute the membrane sector of the complex.</text>
</comment>
<comment type="subcellular location">
    <subcellularLocation>
        <location evidence="1">Cell inner membrane</location>
        <topology evidence="1">Peripheral membrane protein</topology>
    </subcellularLocation>
</comment>
<comment type="similarity">
    <text evidence="1">Belongs to the complex I 23 kDa subunit family.</text>
</comment>
<organism>
    <name type="scientific">Burkholderia cenocepacia (strain HI2424)</name>
    <dbReference type="NCBI Taxonomy" id="331272"/>
    <lineage>
        <taxon>Bacteria</taxon>
        <taxon>Pseudomonadati</taxon>
        <taxon>Pseudomonadota</taxon>
        <taxon>Betaproteobacteria</taxon>
        <taxon>Burkholderiales</taxon>
        <taxon>Burkholderiaceae</taxon>
        <taxon>Burkholderia</taxon>
        <taxon>Burkholderia cepacia complex</taxon>
    </lineage>
</organism>
<name>NUOI_BURCH</name>
<gene>
    <name evidence="1" type="primary">nuoI</name>
    <name type="ordered locus">Bcen2424_2241</name>
</gene>
<reference key="1">
    <citation type="submission" date="2006-08" db="EMBL/GenBank/DDBJ databases">
        <title>Complete sequence of chromosome 1 of Burkholderia cenocepacia HI2424.</title>
        <authorList>
            <person name="Copeland A."/>
            <person name="Lucas S."/>
            <person name="Lapidus A."/>
            <person name="Barry K."/>
            <person name="Detter J.C."/>
            <person name="Glavina del Rio T."/>
            <person name="Hammon N."/>
            <person name="Israni S."/>
            <person name="Pitluck S."/>
            <person name="Chain P."/>
            <person name="Malfatti S."/>
            <person name="Shin M."/>
            <person name="Vergez L."/>
            <person name="Schmutz J."/>
            <person name="Larimer F."/>
            <person name="Land M."/>
            <person name="Hauser L."/>
            <person name="Kyrpides N."/>
            <person name="Kim E."/>
            <person name="LiPuma J.J."/>
            <person name="Gonzalez C.F."/>
            <person name="Konstantinidis K."/>
            <person name="Tiedje J.M."/>
            <person name="Richardson P."/>
        </authorList>
    </citation>
    <scope>NUCLEOTIDE SEQUENCE [LARGE SCALE GENOMIC DNA]</scope>
    <source>
        <strain>HI2424</strain>
    </source>
</reference>
<feature type="chain" id="PRO_0000298485" description="NADH-quinone oxidoreductase subunit I">
    <location>
        <begin position="1"/>
        <end position="162"/>
    </location>
</feature>
<feature type="domain" description="4Fe-4S ferredoxin-type 1" evidence="1">
    <location>
        <begin position="54"/>
        <end position="83"/>
    </location>
</feature>
<feature type="domain" description="4Fe-4S ferredoxin-type 2" evidence="1">
    <location>
        <begin position="93"/>
        <end position="122"/>
    </location>
</feature>
<feature type="binding site" evidence="1">
    <location>
        <position position="63"/>
    </location>
    <ligand>
        <name>[4Fe-4S] cluster</name>
        <dbReference type="ChEBI" id="CHEBI:49883"/>
        <label>1</label>
    </ligand>
</feature>
<feature type="binding site" evidence="1">
    <location>
        <position position="66"/>
    </location>
    <ligand>
        <name>[4Fe-4S] cluster</name>
        <dbReference type="ChEBI" id="CHEBI:49883"/>
        <label>1</label>
    </ligand>
</feature>
<feature type="binding site" evidence="1">
    <location>
        <position position="69"/>
    </location>
    <ligand>
        <name>[4Fe-4S] cluster</name>
        <dbReference type="ChEBI" id="CHEBI:49883"/>
        <label>1</label>
    </ligand>
</feature>
<feature type="binding site" evidence="1">
    <location>
        <position position="73"/>
    </location>
    <ligand>
        <name>[4Fe-4S] cluster</name>
        <dbReference type="ChEBI" id="CHEBI:49883"/>
        <label>2</label>
    </ligand>
</feature>
<feature type="binding site" evidence="1">
    <location>
        <position position="102"/>
    </location>
    <ligand>
        <name>[4Fe-4S] cluster</name>
        <dbReference type="ChEBI" id="CHEBI:49883"/>
        <label>2</label>
    </ligand>
</feature>
<feature type="binding site" evidence="1">
    <location>
        <position position="105"/>
    </location>
    <ligand>
        <name>[4Fe-4S] cluster</name>
        <dbReference type="ChEBI" id="CHEBI:49883"/>
        <label>2</label>
    </ligand>
</feature>
<feature type="binding site" evidence="1">
    <location>
        <position position="108"/>
    </location>
    <ligand>
        <name>[4Fe-4S] cluster</name>
        <dbReference type="ChEBI" id="CHEBI:49883"/>
        <label>2</label>
    </ligand>
</feature>
<feature type="binding site" evidence="1">
    <location>
        <position position="112"/>
    </location>
    <ligand>
        <name>[4Fe-4S] cluster</name>
        <dbReference type="ChEBI" id="CHEBI:49883"/>
        <label>1</label>
    </ligand>
</feature>